<reference key="1">
    <citation type="journal article" date="1996" name="Biochem. Biophys. Res. Commun.">
        <title>Molecular cloning of cDNA and analysis of expression of the gene for alpha-glucosidase from the hypopharyngeal gland of the honeybee apis mellifera L.</title>
        <authorList>
            <person name="Ohashi K."/>
            <person name="Sawata M."/>
            <person name="Takeuchi H."/>
            <person name="Natori S."/>
            <person name="Kubo T."/>
        </authorList>
    </citation>
    <scope>NUCLEOTIDE SEQUENCE [MRNA]</scope>
    <scope>PROTEIN SEQUENCE OF 18-41; 116-137 AND 255-267</scope>
    <source>
        <tissue>Hypopharyngeal gland</tissue>
    </source>
</reference>
<reference key="2">
    <citation type="journal article" date="1996" name="J. Biochem.">
        <title>Change in the expression of hypopharyngeal-gland proteins of the worker honeybees (Apis mellifera L.) with age and/or role.</title>
        <authorList>
            <person name="Kubo T."/>
            <person name="Sasaki M."/>
            <person name="Nakamura J."/>
            <person name="Sasagawa H."/>
            <person name="Ohashi K."/>
            <person name="Takeuchi H."/>
            <person name="Natori S."/>
        </authorList>
    </citation>
    <scope>CHARACTERIZATION</scope>
    <source>
        <tissue>Hypopharyngeal gland</tissue>
    </source>
</reference>
<reference key="3">
    <citation type="journal article" date="2009" name="J. Proteome Res.">
        <title>Proteomic analysis of honey bee brain upon ontogenetic and behavioral development.</title>
        <authorList>
            <person name="Garcia L."/>
            <person name="Saraiva Garcia C.H."/>
            <person name="Calabria L.K."/>
            <person name="Costa Nunes da Cruz G."/>
            <person name="Sanchez Puentes A."/>
            <person name="Bao S.N."/>
            <person name="Fontes W."/>
            <person name="Ricart C.A."/>
            <person name="Salmen Espindola F."/>
            <person name="Valle de Sousa M."/>
        </authorList>
    </citation>
    <scope>TISSUE SPECIFICITY</scope>
    <scope>DEVELOPMENTAL STAGE</scope>
    <scope>MASS SPECTROMETRY</scope>
    <scope>IDENTIFICATION BY MASS SPECTROMETRY</scope>
</reference>
<proteinExistence type="evidence at protein level"/>
<name>MAL1_APIME</name>
<accession>Q17058</accession>
<protein>
    <recommendedName>
        <fullName>Alpha-glucosidase</fullName>
        <ecNumber>3.2.1.20</ecNumber>
    </recommendedName>
    <alternativeName>
        <fullName>Maltase</fullName>
    </alternativeName>
</protein>
<keyword id="KW-0903">Direct protein sequencing</keyword>
<keyword id="KW-0325">Glycoprotein</keyword>
<keyword id="KW-0326">Glycosidase</keyword>
<keyword id="KW-0378">Hydrolase</keyword>
<keyword id="KW-1185">Reference proteome</keyword>
<keyword id="KW-0732">Signal</keyword>
<comment type="function">
    <text>Converts sucrose in nectar to glucose and fructose.</text>
</comment>
<comment type="catalytic activity">
    <reaction>
        <text>Hydrolysis of terminal, non-reducing (1-&gt;4)-linked alpha-D-glucose residues with release of alpha-D-glucose.</text>
        <dbReference type="EC" id="3.2.1.20"/>
    </reaction>
</comment>
<comment type="subunit">
    <text>Monomer.</text>
</comment>
<comment type="tissue specificity">
    <text evidence="3">Expressed specifically in the hypopharyngeal glands of worker bees. Also found in the brain of worker bees (at protein level) (PubMed:19203288).</text>
</comment>
<comment type="developmental stage">
    <text evidence="3">During the age-related subcaste transition from nurse worker bee to forager worker bee expression of major royal jelly proteins is reduced and alpha-glucosidase is increased (at protein level).</text>
</comment>
<comment type="mass spectrometry" mass="65740.0" method="MALDI" evidence="3"/>
<comment type="similarity">
    <text evidence="5">Belongs to the glycosyl hydrolase 13 family.</text>
</comment>
<dbReference type="EC" id="3.2.1.20"/>
<dbReference type="EMBL" id="D79208">
    <property type="protein sequence ID" value="BAA11466.1"/>
    <property type="molecule type" value="mRNA"/>
</dbReference>
<dbReference type="PIR" id="JC4714">
    <property type="entry name" value="JC4714"/>
</dbReference>
<dbReference type="RefSeq" id="NP_001011608.1">
    <property type="nucleotide sequence ID" value="NM_001011608.1"/>
</dbReference>
<dbReference type="RefSeq" id="XP_006560868.1">
    <property type="nucleotide sequence ID" value="XM_006560805.2"/>
</dbReference>
<dbReference type="RefSeq" id="XP_006560869.1">
    <property type="nucleotide sequence ID" value="XM_006560806.2"/>
</dbReference>
<dbReference type="RefSeq" id="XP_006560870.1">
    <property type="nucleotide sequence ID" value="XM_006560807.2"/>
</dbReference>
<dbReference type="RefSeq" id="XP_016767968.1">
    <property type="nucleotide sequence ID" value="XM_016912479.1"/>
</dbReference>
<dbReference type="RefSeq" id="XP_016767969.1">
    <property type="nucleotide sequence ID" value="XM_016912480.1"/>
</dbReference>
<dbReference type="RefSeq" id="XP_016767971.1">
    <property type="nucleotide sequence ID" value="XM_016912482.1"/>
</dbReference>
<dbReference type="SMR" id="Q17058"/>
<dbReference type="STRING" id="7460.Q17058"/>
<dbReference type="BindingDB" id="Q17058"/>
<dbReference type="ChEMBL" id="CHEMBL4406"/>
<dbReference type="CAZy" id="GH13">
    <property type="family name" value="Glycoside Hydrolase Family 13"/>
</dbReference>
<dbReference type="PaxDb" id="7460-GB43247-PA"/>
<dbReference type="EnsemblMetazoa" id="NM_001011608">
    <property type="protein sequence ID" value="NP_001011608"/>
    <property type="gene ID" value="GeneID_406131"/>
</dbReference>
<dbReference type="GeneID" id="406131"/>
<dbReference type="KEGG" id="ame:406131"/>
<dbReference type="CTD" id="100121079"/>
<dbReference type="eggNOG" id="KOG0471">
    <property type="taxonomic scope" value="Eukaryota"/>
</dbReference>
<dbReference type="InParanoid" id="Q17058"/>
<dbReference type="OrthoDB" id="1740265at2759"/>
<dbReference type="PhylomeDB" id="Q17058"/>
<dbReference type="SABIO-RK" id="Q17058"/>
<dbReference type="PRO" id="PR:Q17058"/>
<dbReference type="Proteomes" id="UP000005203">
    <property type="component" value="Linkage group LG6"/>
</dbReference>
<dbReference type="GO" id="GO:0004558">
    <property type="term" value="F:alpha-1,4-glucosidase activity"/>
    <property type="evidence" value="ECO:0007669"/>
    <property type="project" value="UniProtKB-EC"/>
</dbReference>
<dbReference type="GO" id="GO:0005975">
    <property type="term" value="P:carbohydrate metabolic process"/>
    <property type="evidence" value="ECO:0007669"/>
    <property type="project" value="InterPro"/>
</dbReference>
<dbReference type="CDD" id="cd11328">
    <property type="entry name" value="AmyAc_maltase"/>
    <property type="match status" value="1"/>
</dbReference>
<dbReference type="FunFam" id="3.90.400.10:FF:000001">
    <property type="entry name" value="Maltase A3, isoform A"/>
    <property type="match status" value="1"/>
</dbReference>
<dbReference type="Gene3D" id="3.20.20.80">
    <property type="entry name" value="Glycosidases"/>
    <property type="match status" value="1"/>
</dbReference>
<dbReference type="Gene3D" id="3.90.400.10">
    <property type="entry name" value="Oligo-1,6-glucosidase, Domain 2"/>
    <property type="match status" value="1"/>
</dbReference>
<dbReference type="InterPro" id="IPR006047">
    <property type="entry name" value="Glyco_hydro_13_cat_dom"/>
</dbReference>
<dbReference type="InterPro" id="IPR017853">
    <property type="entry name" value="Glycoside_hydrolase_SF"/>
</dbReference>
<dbReference type="InterPro" id="IPR045857">
    <property type="entry name" value="O16G_dom_2"/>
</dbReference>
<dbReference type="PANTHER" id="PTHR10357">
    <property type="entry name" value="ALPHA-AMYLASE FAMILY MEMBER"/>
    <property type="match status" value="1"/>
</dbReference>
<dbReference type="PANTHER" id="PTHR10357:SF179">
    <property type="entry name" value="NEUTRAL AND BASIC AMINO ACID TRANSPORT PROTEIN RBAT"/>
    <property type="match status" value="1"/>
</dbReference>
<dbReference type="Pfam" id="PF00128">
    <property type="entry name" value="Alpha-amylase"/>
    <property type="match status" value="1"/>
</dbReference>
<dbReference type="SMART" id="SM00642">
    <property type="entry name" value="Aamy"/>
    <property type="match status" value="1"/>
</dbReference>
<dbReference type="SUPFAM" id="SSF51445">
    <property type="entry name" value="(Trans)glycosidases"/>
    <property type="match status" value="1"/>
</dbReference>
<dbReference type="SUPFAM" id="SSF51011">
    <property type="entry name" value="Glycosyl hydrolase domain"/>
    <property type="match status" value="1"/>
</dbReference>
<sequence length="567" mass="65565">MKAVIVFCLMALSIVDAAWKPLPENLKEDLIVYQVYPRSFKDSNGDGIGDIEGIKEKLDHFLEMGVDMFWLSPIYPSPMVDFGYDISNYTDVHPIFGTISDLDNLVSAAHEKGLKIILDFVPNHTSDQHEWFQLSLKNIEPYNNYYIWHPGKIVNGKRVPPTNWVGVFGGSAWSWREERQAYYLHQFAPEQPDLNYYNPVVLDDMQNVLRFWLRRGFDGFRVDALPYICEDMRFLDEPLSGETNDPNKTEYTLKIYTHDIPETYNVVRKFRDVLDEFPQPKHMLIEAYTNLSMTMKYYDYGADFPFNFAFIKNVSRDSNSSDFKKLVDNWMTYMPPSGIPNWVPGNHDQLRLVSRFGEEKARMITTMSLLLPGVAVNYYGDEIGMSDTYISWEDTQDPQGCGAGKENYQTMSRDPARTPFQWDDSVSAGFSSSSNTWLRVNENYKTVNLAAEKKDKNSFFNMFKKFASLKKSPYFKEANLNTRMLNDNVFAFSRETEDNGSLYAILNFSNEEQIVDLKAFNNVPKKLNMFYNNFNSDIKSISNNEQVKVSALGFFILISQDAKFGNF</sequence>
<feature type="signal peptide" evidence="4">
    <location>
        <begin position="1"/>
        <end position="17"/>
    </location>
</feature>
<feature type="chain" id="PRO_0000001452" description="Alpha-glucosidase">
    <location>
        <begin position="18"/>
        <end position="567"/>
    </location>
</feature>
<feature type="active site" description="Nucleophile" evidence="1">
    <location>
        <position position="223"/>
    </location>
</feature>
<feature type="active site" description="Proton donor" evidence="1">
    <location>
        <position position="286"/>
    </location>
</feature>
<feature type="site" description="Transition state stabilizer" evidence="1">
    <location>
        <position position="348"/>
    </location>
</feature>
<feature type="glycosylation site" description="N-linked (GlcNAc...) asparagine" evidence="2">
    <location>
        <position position="88"/>
    </location>
</feature>
<feature type="glycosylation site" description="N-linked (GlcNAc...) asparagine" evidence="2">
    <location>
        <position position="123"/>
    </location>
</feature>
<feature type="glycosylation site" description="N-linked (GlcNAc...) asparagine" evidence="2">
    <location>
        <position position="247"/>
    </location>
</feature>
<feature type="glycosylation site" description="N-linked (GlcNAc...) asparagine" evidence="2">
    <location>
        <position position="290"/>
    </location>
</feature>
<feature type="glycosylation site" description="N-linked (GlcNAc...) asparagine" evidence="2">
    <location>
        <position position="313"/>
    </location>
</feature>
<feature type="glycosylation site" description="N-linked (GlcNAc...) asparagine" evidence="2">
    <location>
        <position position="319"/>
    </location>
</feature>
<feature type="glycosylation site" description="N-linked (GlcNAc...) asparagine" evidence="2">
    <location>
        <position position="499"/>
    </location>
</feature>
<feature type="glycosylation site" description="N-linked (GlcNAc...) asparagine" evidence="2">
    <location>
        <position position="507"/>
    </location>
</feature>
<evidence type="ECO:0000250" key="1"/>
<evidence type="ECO:0000255" key="2"/>
<evidence type="ECO:0000269" key="3">
    <source>
    </source>
</evidence>
<evidence type="ECO:0000269" key="4">
    <source>
    </source>
</evidence>
<evidence type="ECO:0000305" key="5"/>
<evidence type="ECO:0000312" key="6">
    <source>
        <dbReference type="Proteomes" id="UP000005203"/>
    </source>
</evidence>
<organism evidence="6">
    <name type="scientific">Apis mellifera</name>
    <name type="common">Honeybee</name>
    <dbReference type="NCBI Taxonomy" id="7460"/>
    <lineage>
        <taxon>Eukaryota</taxon>
        <taxon>Metazoa</taxon>
        <taxon>Ecdysozoa</taxon>
        <taxon>Arthropoda</taxon>
        <taxon>Hexapoda</taxon>
        <taxon>Insecta</taxon>
        <taxon>Pterygota</taxon>
        <taxon>Neoptera</taxon>
        <taxon>Endopterygota</taxon>
        <taxon>Hymenoptera</taxon>
        <taxon>Apocrita</taxon>
        <taxon>Aculeata</taxon>
        <taxon>Apoidea</taxon>
        <taxon>Anthophila</taxon>
        <taxon>Apidae</taxon>
        <taxon>Apis</taxon>
    </lineage>
</organism>